<name>IRF6_MOUSE</name>
<dbReference type="EMBL" id="U73029">
    <property type="protein sequence ID" value="AAB36714.1"/>
    <property type="molecule type" value="mRNA"/>
</dbReference>
<dbReference type="EMBL" id="AK143299">
    <property type="protein sequence ID" value="BAE25338.1"/>
    <property type="molecule type" value="mRNA"/>
</dbReference>
<dbReference type="EMBL" id="AK143954">
    <property type="protein sequence ID" value="BAE25628.1"/>
    <property type="molecule type" value="mRNA"/>
</dbReference>
<dbReference type="EMBL" id="AL365322">
    <property type="status" value="NOT_ANNOTATED_CDS"/>
    <property type="molecule type" value="Genomic_DNA"/>
</dbReference>
<dbReference type="EMBL" id="CH466555">
    <property type="protein sequence ID" value="EDL12956.1"/>
    <property type="molecule type" value="Genomic_DNA"/>
</dbReference>
<dbReference type="EMBL" id="BC008515">
    <property type="protein sequence ID" value="AAH08515.1"/>
    <property type="molecule type" value="mRNA"/>
</dbReference>
<dbReference type="CCDS" id="CCDS15632.1"/>
<dbReference type="RefSeq" id="NP_058547.2">
    <property type="nucleotide sequence ID" value="NM_016851.2"/>
</dbReference>
<dbReference type="RefSeq" id="XP_006497325.1">
    <property type="nucleotide sequence ID" value="XM_006497262.4"/>
</dbReference>
<dbReference type="RefSeq" id="XP_006497326.1">
    <property type="nucleotide sequence ID" value="XM_006497263.4"/>
</dbReference>
<dbReference type="SMR" id="P97431"/>
<dbReference type="FunCoup" id="P97431">
    <property type="interactions" value="1803"/>
</dbReference>
<dbReference type="IntAct" id="P97431">
    <property type="interactions" value="1"/>
</dbReference>
<dbReference type="STRING" id="10090.ENSMUSP00000075839"/>
<dbReference type="iPTMnet" id="P97431"/>
<dbReference type="PhosphoSitePlus" id="P97431"/>
<dbReference type="PaxDb" id="10090-ENSMUSP00000075839"/>
<dbReference type="PeptideAtlas" id="P97431"/>
<dbReference type="ProteomicsDB" id="267153"/>
<dbReference type="Antibodypedia" id="20702">
    <property type="antibodies" value="450 antibodies from 39 providers"/>
</dbReference>
<dbReference type="DNASU" id="54139"/>
<dbReference type="Ensembl" id="ENSMUST00000076521.7">
    <property type="protein sequence ID" value="ENSMUSP00000075839.6"/>
    <property type="gene ID" value="ENSMUSG00000026638.16"/>
</dbReference>
<dbReference type="GeneID" id="54139"/>
<dbReference type="KEGG" id="mmu:54139"/>
<dbReference type="UCSC" id="uc007edy.1">
    <property type="organism name" value="mouse"/>
</dbReference>
<dbReference type="AGR" id="MGI:1859211"/>
<dbReference type="CTD" id="3664"/>
<dbReference type="MGI" id="MGI:1859211">
    <property type="gene designation" value="Irf6"/>
</dbReference>
<dbReference type="VEuPathDB" id="HostDB:ENSMUSG00000026638"/>
<dbReference type="eggNOG" id="ENOG502QRNT">
    <property type="taxonomic scope" value="Eukaryota"/>
</dbReference>
<dbReference type="GeneTree" id="ENSGT00940000157451"/>
<dbReference type="HOGENOM" id="CLU_031544_0_1_1"/>
<dbReference type="InParanoid" id="P97431"/>
<dbReference type="OMA" id="NEAWPKE"/>
<dbReference type="OrthoDB" id="9856880at2759"/>
<dbReference type="PhylomeDB" id="P97431"/>
<dbReference type="TreeFam" id="TF328512"/>
<dbReference type="BioGRID-ORCS" id="54139">
    <property type="hits" value="2 hits in 79 CRISPR screens"/>
</dbReference>
<dbReference type="PRO" id="PR:P97431"/>
<dbReference type="Proteomes" id="UP000000589">
    <property type="component" value="Chromosome 1"/>
</dbReference>
<dbReference type="RNAct" id="P97431">
    <property type="molecule type" value="protein"/>
</dbReference>
<dbReference type="Bgee" id="ENSMUSG00000026638">
    <property type="expression patterns" value="Expressed in substantia propria of cornea and 206 other cell types or tissues"/>
</dbReference>
<dbReference type="GO" id="GO:0005737">
    <property type="term" value="C:cytoplasm"/>
    <property type="evidence" value="ECO:0000250"/>
    <property type="project" value="UniProtKB"/>
</dbReference>
<dbReference type="GO" id="GO:0005634">
    <property type="term" value="C:nucleus"/>
    <property type="evidence" value="ECO:0007669"/>
    <property type="project" value="UniProtKB-SubCell"/>
</dbReference>
<dbReference type="GO" id="GO:0003677">
    <property type="term" value="F:DNA binding"/>
    <property type="evidence" value="ECO:0000314"/>
    <property type="project" value="UniProtKB"/>
</dbReference>
<dbReference type="GO" id="GO:0001228">
    <property type="term" value="F:DNA-binding transcription activator activity, RNA polymerase II-specific"/>
    <property type="evidence" value="ECO:0000315"/>
    <property type="project" value="MGI"/>
</dbReference>
<dbReference type="GO" id="GO:0003700">
    <property type="term" value="F:DNA-binding transcription factor activity"/>
    <property type="evidence" value="ECO:0000314"/>
    <property type="project" value="UniProtKB"/>
</dbReference>
<dbReference type="GO" id="GO:0000976">
    <property type="term" value="F:transcription cis-regulatory region binding"/>
    <property type="evidence" value="ECO:0007669"/>
    <property type="project" value="InterPro"/>
</dbReference>
<dbReference type="GO" id="GO:0048468">
    <property type="term" value="P:cell development"/>
    <property type="evidence" value="ECO:0000315"/>
    <property type="project" value="MGI"/>
</dbReference>
<dbReference type="GO" id="GO:0008283">
    <property type="term" value="P:cell population proliferation"/>
    <property type="evidence" value="ECO:0000316"/>
    <property type="project" value="MGI"/>
</dbReference>
<dbReference type="GO" id="GO:1904888">
    <property type="term" value="P:cranial skeletal system development"/>
    <property type="evidence" value="ECO:0000315"/>
    <property type="project" value="MGI"/>
</dbReference>
<dbReference type="GO" id="GO:0030216">
    <property type="term" value="P:keratinocyte differentiation"/>
    <property type="evidence" value="ECO:0000315"/>
    <property type="project" value="MGI"/>
</dbReference>
<dbReference type="GO" id="GO:0043616">
    <property type="term" value="P:keratinocyte proliferation"/>
    <property type="evidence" value="ECO:0000315"/>
    <property type="project" value="MGI"/>
</dbReference>
<dbReference type="GO" id="GO:0060173">
    <property type="term" value="P:limb development"/>
    <property type="evidence" value="ECO:0000315"/>
    <property type="project" value="MGI"/>
</dbReference>
<dbReference type="GO" id="GO:0060644">
    <property type="term" value="P:mammary gland epithelial cell differentiation"/>
    <property type="evidence" value="ECO:0000270"/>
    <property type="project" value="UniProtKB"/>
</dbReference>
<dbReference type="GO" id="GO:0010839">
    <property type="term" value="P:negative regulation of keratinocyte proliferation"/>
    <property type="evidence" value="ECO:0000316"/>
    <property type="project" value="MGI"/>
</dbReference>
<dbReference type="GO" id="GO:2000647">
    <property type="term" value="P:negative regulation of stem cell proliferation"/>
    <property type="evidence" value="ECO:0000316"/>
    <property type="project" value="MGI"/>
</dbReference>
<dbReference type="GO" id="GO:0045893">
    <property type="term" value="P:positive regulation of DNA-templated transcription"/>
    <property type="evidence" value="ECO:0000314"/>
    <property type="project" value="UniProtKB"/>
</dbReference>
<dbReference type="GO" id="GO:0060021">
    <property type="term" value="P:roof of mouth development"/>
    <property type="evidence" value="ECO:0000315"/>
    <property type="project" value="MGI"/>
</dbReference>
<dbReference type="GO" id="GO:0043588">
    <property type="term" value="P:skin development"/>
    <property type="evidence" value="ECO:0000315"/>
    <property type="project" value="MGI"/>
</dbReference>
<dbReference type="GO" id="GO:0072089">
    <property type="term" value="P:stem cell proliferation"/>
    <property type="evidence" value="ECO:0000316"/>
    <property type="project" value="MGI"/>
</dbReference>
<dbReference type="CDD" id="cd00103">
    <property type="entry name" value="IRF"/>
    <property type="match status" value="1"/>
</dbReference>
<dbReference type="FunFam" id="2.60.200.10:FF:000003">
    <property type="entry name" value="Interferon regulatory factor 5"/>
    <property type="match status" value="1"/>
</dbReference>
<dbReference type="FunFam" id="1.10.10.10:FF:000093">
    <property type="entry name" value="Putative interferon regulatory factor 6"/>
    <property type="match status" value="1"/>
</dbReference>
<dbReference type="Gene3D" id="2.60.200.10">
    <property type="match status" value="1"/>
</dbReference>
<dbReference type="Gene3D" id="1.10.10.10">
    <property type="entry name" value="Winged helix-like DNA-binding domain superfamily/Winged helix DNA-binding domain"/>
    <property type="match status" value="1"/>
</dbReference>
<dbReference type="InterPro" id="IPR019817">
    <property type="entry name" value="Interferon_reg_fac_CS"/>
</dbReference>
<dbReference type="InterPro" id="IPR001346">
    <property type="entry name" value="Interferon_reg_fact_DNA-bd_dom"/>
</dbReference>
<dbReference type="InterPro" id="IPR019471">
    <property type="entry name" value="Interferon_reg_factor-3"/>
</dbReference>
<dbReference type="InterPro" id="IPR017855">
    <property type="entry name" value="SMAD-like_dom_sf"/>
</dbReference>
<dbReference type="InterPro" id="IPR008984">
    <property type="entry name" value="SMAD_FHA_dom_sf"/>
</dbReference>
<dbReference type="InterPro" id="IPR036388">
    <property type="entry name" value="WH-like_DNA-bd_sf"/>
</dbReference>
<dbReference type="InterPro" id="IPR036390">
    <property type="entry name" value="WH_DNA-bd_sf"/>
</dbReference>
<dbReference type="PANTHER" id="PTHR11949">
    <property type="entry name" value="INTERFERON REGULATORY FACTOR"/>
    <property type="match status" value="1"/>
</dbReference>
<dbReference type="PANTHER" id="PTHR11949:SF9">
    <property type="entry name" value="INTERFERON REGULATORY FACTOR 6"/>
    <property type="match status" value="1"/>
</dbReference>
<dbReference type="Pfam" id="PF00605">
    <property type="entry name" value="IRF"/>
    <property type="match status" value="1"/>
</dbReference>
<dbReference type="Pfam" id="PF10401">
    <property type="entry name" value="IRF-3"/>
    <property type="match status" value="1"/>
</dbReference>
<dbReference type="PRINTS" id="PR00267">
    <property type="entry name" value="INTFRNREGFCT"/>
</dbReference>
<dbReference type="SMART" id="SM00348">
    <property type="entry name" value="IRF"/>
    <property type="match status" value="1"/>
</dbReference>
<dbReference type="SMART" id="SM01243">
    <property type="entry name" value="IRF-3"/>
    <property type="match status" value="1"/>
</dbReference>
<dbReference type="SUPFAM" id="SSF49879">
    <property type="entry name" value="SMAD/FHA domain"/>
    <property type="match status" value="1"/>
</dbReference>
<dbReference type="SUPFAM" id="SSF46785">
    <property type="entry name" value="Winged helix' DNA-binding domain"/>
    <property type="match status" value="1"/>
</dbReference>
<dbReference type="PROSITE" id="PS00601">
    <property type="entry name" value="IRF_1"/>
    <property type="match status" value="1"/>
</dbReference>
<dbReference type="PROSITE" id="PS51507">
    <property type="entry name" value="IRF_2"/>
    <property type="match status" value="1"/>
</dbReference>
<accession>P97431</accession>
<accession>Q91VD0</accession>
<sequence>MALHPRRVRLKPWLVAQVDSGLYPGLIWLHRDSKRFQIPWKHATRHSPQQEEENTIFKAWAVETGKYQEGVDDPDPAKWKAQLRCALNKSREFNLMYDGTKEVPMNPVKIYQVCDIPQTQGSVINPGSTGSAPWDEKDNDVDEDEEEDELEQSQHHVPIQDTFPFLNINGSPMAPASVGNCSVGNCSPESVWPKTEPLEMEVPQAPIQPFYSSPELWISSLPMTDLDIKFQYRGKEYGQTMTVSNPQGCRLFYGDLGPMPDQEELFGPVSLEQVKFPGPEHITNEKQKLFTSKLLDVMDRGLILEVSGHAIYAIRLCQCKVYWSGPCAPSLAAPNLIERQKKVKLFCLETFLSELIAHQKGQIEKQPPFEIYLCFGEEWPDGKPLERKLILVQVIPVVARMIYEMFSGDFTRSFDSGSVRLQISTPDIKDNIVAQLKQLYRILQTQESWQPMQPAPSMQLPQALPAQ</sequence>
<reference key="1">
    <citation type="submission" date="1996-10" db="EMBL/GenBank/DDBJ databases">
        <authorList>
            <person name="Grossman A."/>
            <person name="Mittrucker H.W."/>
            <person name="Antonio L."/>
            <person name="Mak T.W."/>
        </authorList>
    </citation>
    <scope>NUCLEOTIDE SEQUENCE [MRNA]</scope>
    <source>
        <strain>BALB/cJ</strain>
        <tissue>Colon</tissue>
    </source>
</reference>
<reference key="2">
    <citation type="journal article" date="2005" name="Science">
        <title>The transcriptional landscape of the mammalian genome.</title>
        <authorList>
            <person name="Carninci P."/>
            <person name="Kasukawa T."/>
            <person name="Katayama S."/>
            <person name="Gough J."/>
            <person name="Frith M.C."/>
            <person name="Maeda N."/>
            <person name="Oyama R."/>
            <person name="Ravasi T."/>
            <person name="Lenhard B."/>
            <person name="Wells C."/>
            <person name="Kodzius R."/>
            <person name="Shimokawa K."/>
            <person name="Bajic V.B."/>
            <person name="Brenner S.E."/>
            <person name="Batalov S."/>
            <person name="Forrest A.R."/>
            <person name="Zavolan M."/>
            <person name="Davis M.J."/>
            <person name="Wilming L.G."/>
            <person name="Aidinis V."/>
            <person name="Allen J.E."/>
            <person name="Ambesi-Impiombato A."/>
            <person name="Apweiler R."/>
            <person name="Aturaliya R.N."/>
            <person name="Bailey T.L."/>
            <person name="Bansal M."/>
            <person name="Baxter L."/>
            <person name="Beisel K.W."/>
            <person name="Bersano T."/>
            <person name="Bono H."/>
            <person name="Chalk A.M."/>
            <person name="Chiu K.P."/>
            <person name="Choudhary V."/>
            <person name="Christoffels A."/>
            <person name="Clutterbuck D.R."/>
            <person name="Crowe M.L."/>
            <person name="Dalla E."/>
            <person name="Dalrymple B.P."/>
            <person name="de Bono B."/>
            <person name="Della Gatta G."/>
            <person name="di Bernardo D."/>
            <person name="Down T."/>
            <person name="Engstrom P."/>
            <person name="Fagiolini M."/>
            <person name="Faulkner G."/>
            <person name="Fletcher C.F."/>
            <person name="Fukushima T."/>
            <person name="Furuno M."/>
            <person name="Futaki S."/>
            <person name="Gariboldi M."/>
            <person name="Georgii-Hemming P."/>
            <person name="Gingeras T.R."/>
            <person name="Gojobori T."/>
            <person name="Green R.E."/>
            <person name="Gustincich S."/>
            <person name="Harbers M."/>
            <person name="Hayashi Y."/>
            <person name="Hensch T.K."/>
            <person name="Hirokawa N."/>
            <person name="Hill D."/>
            <person name="Huminiecki L."/>
            <person name="Iacono M."/>
            <person name="Ikeo K."/>
            <person name="Iwama A."/>
            <person name="Ishikawa T."/>
            <person name="Jakt M."/>
            <person name="Kanapin A."/>
            <person name="Katoh M."/>
            <person name="Kawasawa Y."/>
            <person name="Kelso J."/>
            <person name="Kitamura H."/>
            <person name="Kitano H."/>
            <person name="Kollias G."/>
            <person name="Krishnan S.P."/>
            <person name="Kruger A."/>
            <person name="Kummerfeld S.K."/>
            <person name="Kurochkin I.V."/>
            <person name="Lareau L.F."/>
            <person name="Lazarevic D."/>
            <person name="Lipovich L."/>
            <person name="Liu J."/>
            <person name="Liuni S."/>
            <person name="McWilliam S."/>
            <person name="Madan Babu M."/>
            <person name="Madera M."/>
            <person name="Marchionni L."/>
            <person name="Matsuda H."/>
            <person name="Matsuzawa S."/>
            <person name="Miki H."/>
            <person name="Mignone F."/>
            <person name="Miyake S."/>
            <person name="Morris K."/>
            <person name="Mottagui-Tabar S."/>
            <person name="Mulder N."/>
            <person name="Nakano N."/>
            <person name="Nakauchi H."/>
            <person name="Ng P."/>
            <person name="Nilsson R."/>
            <person name="Nishiguchi S."/>
            <person name="Nishikawa S."/>
            <person name="Nori F."/>
            <person name="Ohara O."/>
            <person name="Okazaki Y."/>
            <person name="Orlando V."/>
            <person name="Pang K.C."/>
            <person name="Pavan W.J."/>
            <person name="Pavesi G."/>
            <person name="Pesole G."/>
            <person name="Petrovsky N."/>
            <person name="Piazza S."/>
            <person name="Reed J."/>
            <person name="Reid J.F."/>
            <person name="Ring B.Z."/>
            <person name="Ringwald M."/>
            <person name="Rost B."/>
            <person name="Ruan Y."/>
            <person name="Salzberg S.L."/>
            <person name="Sandelin A."/>
            <person name="Schneider C."/>
            <person name="Schoenbach C."/>
            <person name="Sekiguchi K."/>
            <person name="Semple C.A."/>
            <person name="Seno S."/>
            <person name="Sessa L."/>
            <person name="Sheng Y."/>
            <person name="Shibata Y."/>
            <person name="Shimada H."/>
            <person name="Shimada K."/>
            <person name="Silva D."/>
            <person name="Sinclair B."/>
            <person name="Sperling S."/>
            <person name="Stupka E."/>
            <person name="Sugiura K."/>
            <person name="Sultana R."/>
            <person name="Takenaka Y."/>
            <person name="Taki K."/>
            <person name="Tammoja K."/>
            <person name="Tan S.L."/>
            <person name="Tang S."/>
            <person name="Taylor M.S."/>
            <person name="Tegner J."/>
            <person name="Teichmann S.A."/>
            <person name="Ueda H.R."/>
            <person name="van Nimwegen E."/>
            <person name="Verardo R."/>
            <person name="Wei C.L."/>
            <person name="Yagi K."/>
            <person name="Yamanishi H."/>
            <person name="Zabarovsky E."/>
            <person name="Zhu S."/>
            <person name="Zimmer A."/>
            <person name="Hide W."/>
            <person name="Bult C."/>
            <person name="Grimmond S.M."/>
            <person name="Teasdale R.D."/>
            <person name="Liu E.T."/>
            <person name="Brusic V."/>
            <person name="Quackenbush J."/>
            <person name="Wahlestedt C."/>
            <person name="Mattick J.S."/>
            <person name="Hume D.A."/>
            <person name="Kai C."/>
            <person name="Sasaki D."/>
            <person name="Tomaru Y."/>
            <person name="Fukuda S."/>
            <person name="Kanamori-Katayama M."/>
            <person name="Suzuki M."/>
            <person name="Aoki J."/>
            <person name="Arakawa T."/>
            <person name="Iida J."/>
            <person name="Imamura K."/>
            <person name="Itoh M."/>
            <person name="Kato T."/>
            <person name="Kawaji H."/>
            <person name="Kawagashira N."/>
            <person name="Kawashima T."/>
            <person name="Kojima M."/>
            <person name="Kondo S."/>
            <person name="Konno H."/>
            <person name="Nakano K."/>
            <person name="Ninomiya N."/>
            <person name="Nishio T."/>
            <person name="Okada M."/>
            <person name="Plessy C."/>
            <person name="Shibata K."/>
            <person name="Shiraki T."/>
            <person name="Suzuki S."/>
            <person name="Tagami M."/>
            <person name="Waki K."/>
            <person name="Watahiki A."/>
            <person name="Okamura-Oho Y."/>
            <person name="Suzuki H."/>
            <person name="Kawai J."/>
            <person name="Hayashizaki Y."/>
        </authorList>
    </citation>
    <scope>NUCLEOTIDE SEQUENCE [LARGE SCALE MRNA]</scope>
    <source>
        <strain>C57BL/6J</strain>
        <tissue>Kidney</tissue>
        <tissue>Oviduct</tissue>
    </source>
</reference>
<reference key="3">
    <citation type="journal article" date="2009" name="PLoS Biol.">
        <title>Lineage-specific biology revealed by a finished genome assembly of the mouse.</title>
        <authorList>
            <person name="Church D.M."/>
            <person name="Goodstadt L."/>
            <person name="Hillier L.W."/>
            <person name="Zody M.C."/>
            <person name="Goldstein S."/>
            <person name="She X."/>
            <person name="Bult C.J."/>
            <person name="Agarwala R."/>
            <person name="Cherry J.L."/>
            <person name="DiCuccio M."/>
            <person name="Hlavina W."/>
            <person name="Kapustin Y."/>
            <person name="Meric P."/>
            <person name="Maglott D."/>
            <person name="Birtle Z."/>
            <person name="Marques A.C."/>
            <person name="Graves T."/>
            <person name="Zhou S."/>
            <person name="Teague B."/>
            <person name="Potamousis K."/>
            <person name="Churas C."/>
            <person name="Place M."/>
            <person name="Herschleb J."/>
            <person name="Runnheim R."/>
            <person name="Forrest D."/>
            <person name="Amos-Landgraf J."/>
            <person name="Schwartz D.C."/>
            <person name="Cheng Z."/>
            <person name="Lindblad-Toh K."/>
            <person name="Eichler E.E."/>
            <person name="Ponting C.P."/>
        </authorList>
    </citation>
    <scope>NUCLEOTIDE SEQUENCE [LARGE SCALE GENOMIC DNA]</scope>
    <source>
        <strain>C57BL/6J</strain>
    </source>
</reference>
<reference key="4">
    <citation type="submission" date="2005-09" db="EMBL/GenBank/DDBJ databases">
        <authorList>
            <person name="Mural R.J."/>
            <person name="Adams M.D."/>
            <person name="Myers E.W."/>
            <person name="Smith H.O."/>
            <person name="Venter J.C."/>
        </authorList>
    </citation>
    <scope>NUCLEOTIDE SEQUENCE [LARGE SCALE GENOMIC DNA]</scope>
</reference>
<reference key="5">
    <citation type="journal article" date="2004" name="Genome Res.">
        <title>The status, quality, and expansion of the NIH full-length cDNA project: the Mammalian Gene Collection (MGC).</title>
        <authorList>
            <consortium name="The MGC Project Team"/>
        </authorList>
    </citation>
    <scope>NUCLEOTIDE SEQUENCE [LARGE SCALE MRNA]</scope>
    <source>
        <strain>FVB/N</strain>
        <tissue>Mammary tumor</tissue>
    </source>
</reference>
<reference key="6">
    <citation type="journal article" date="2002" name="Nat. Genet.">
        <title>Mutations in IRF6 cause Van der Woude and popliteal pterygium syndromes.</title>
        <authorList>
            <person name="Kondo S."/>
            <person name="Schutte B.C."/>
            <person name="Richardson R.J."/>
            <person name="Bjork B.C."/>
            <person name="Knight A.S."/>
            <person name="Watanabe Y."/>
            <person name="Howard E."/>
            <person name="de Lima R.L.L."/>
            <person name="Daack-Hirsch S."/>
            <person name="Sander A."/>
            <person name="McDonald-McGinn D.M."/>
            <person name="Zackai E.H."/>
            <person name="Lammer E.J."/>
            <person name="Aylsworth A.S."/>
            <person name="Ardinger H.H."/>
            <person name="Lidral A.C."/>
            <person name="Pober B.R."/>
            <person name="Moreno L."/>
            <person name="Arcos-Burgos M."/>
            <person name="Valencia C."/>
            <person name="Houdayer C."/>
            <person name="Bahuau M."/>
            <person name="Moretti-Ferreira D."/>
            <person name="Richieri-Costa A."/>
            <person name="Dixon M.J."/>
            <person name="Murray J.C."/>
        </authorList>
    </citation>
    <scope>TISSUE SPECIFICITY</scope>
</reference>
<reference key="7">
    <citation type="journal article" date="2006" name="Nat. Genet.">
        <title>Irf6 is a key determinant of the keratinocyte proliferation-differentiation switch.</title>
        <authorList>
            <person name="Richardson R.J."/>
            <person name="Dixon J."/>
            <person name="Malhotra S."/>
            <person name="Hardman M.J."/>
            <person name="Knowles L."/>
            <person name="Boot-Handford R.P."/>
            <person name="Shore P."/>
            <person name="Whitmarsh A."/>
            <person name="Dixon M.J."/>
        </authorList>
    </citation>
    <scope>FUNCTION</scope>
    <scope>MUTAGENESIS OF ARG-84</scope>
</reference>
<reference key="8">
    <citation type="journal article" date="2008" name="Mol. Cell. Biol.">
        <title>Interferon regulatory factor 6 promotes cell cycle arrest and is regulated by the proteasome in a cell cycle-dependent manner.</title>
        <authorList>
            <person name="Bailey C.M."/>
            <person name="Abbott D.E."/>
            <person name="Margaryan N.V."/>
            <person name="Khalkhali-Ellis Z."/>
            <person name="Hendrix M.J.C."/>
        </authorList>
    </citation>
    <scope>FUNCTION</scope>
</reference>
<reference key="9">
    <citation type="journal article" date="2009" name="Hum. Mol. Genet.">
        <title>Missense mutations that cause Van der Woude syndrome and popliteal pterygium syndrome affect the DNA-binding and transcriptional activation functions of IRF6.</title>
        <authorList>
            <person name="Little H.J."/>
            <person name="Rorick N.K."/>
            <person name="Su L.-I."/>
            <person name="Baldock C."/>
            <person name="Malhotra S."/>
            <person name="Jowitt T."/>
            <person name="Gakhar L."/>
            <person name="Subramanian R."/>
            <person name="Schutte B.C."/>
            <person name="Dixon M.J."/>
            <person name="Shore P."/>
        </authorList>
    </citation>
    <scope>FUNCTION</scope>
    <scope>DNA-BINDING</scope>
    <scope>SUBUNIT</scope>
    <scope>SUBCELLULAR LOCATION</scope>
</reference>
<reference key="10">
    <citation type="journal article" date="2010" name="Cell">
        <title>A tissue-specific atlas of mouse protein phosphorylation and expression.</title>
        <authorList>
            <person name="Huttlin E.L."/>
            <person name="Jedrychowski M.P."/>
            <person name="Elias J.E."/>
            <person name="Goswami T."/>
            <person name="Rad R."/>
            <person name="Beausoleil S.A."/>
            <person name="Villen J."/>
            <person name="Haas W."/>
            <person name="Sowa M.E."/>
            <person name="Gygi S.P."/>
        </authorList>
    </citation>
    <scope>IDENTIFICATION BY MASS SPECTROMETRY [LARGE SCALE ANALYSIS]</scope>
    <source>
        <tissue>Pancreas</tissue>
    </source>
</reference>
<reference key="11">
    <citation type="journal article" date="2011" name="Am. J. Med. Genet. A">
        <title>Genomic strategy identifies a missense mutation in WD-repeat domain 65 (WDR65) in an individual with Van der Woude syndrome.</title>
        <authorList>
            <person name="Rorick N.K."/>
            <person name="Kinoshita A."/>
            <person name="Weirather J.L."/>
            <person name="Peyrard-Janvid M."/>
            <person name="de Lima R.L."/>
            <person name="Dunnwald M."/>
            <person name="Shanske A.L."/>
            <person name="Moretti-Ferreira D."/>
            <person name="Koillinen H."/>
            <person name="Kere J."/>
            <person name="Mansilla M.A."/>
            <person name="Murray J.C."/>
            <person name="Goudy S.L."/>
            <person name="Schutte B.C."/>
        </authorList>
    </citation>
    <scope>FUNCTION</scope>
</reference>
<comment type="function">
    <text evidence="5 6 7 8">Probable DNA-binding transcriptional activator. Key determinant of the keratinocyte proliferation-differentiation switch involved in appropriate epidermal development. Plays a role in regulating mammary epithelial cell proliferation. May regulate WDR65 transcription.</text>
</comment>
<comment type="subunit">
    <text evidence="1">Interacts with SERPINB5.</text>
</comment>
<comment type="interaction">
    <interactant intactId="EBI-21183505">
        <id>P97431</id>
    </interactant>
    <interactant intactId="EBI-5260705">
        <id>P37238</id>
        <label>Pparg</label>
    </interactant>
    <organismsDiffer>false</organismsDiffer>
    <experiments>2</experiments>
</comment>
<comment type="subcellular location">
    <subcellularLocation>
        <location evidence="9">Nucleus</location>
    </subcellularLocation>
    <subcellularLocation>
        <location evidence="7">Cytoplasm</location>
    </subcellularLocation>
    <text evidence="9">Translocates to nucleus in response to an activating signal.</text>
</comment>
<comment type="tissue specificity">
    <text evidence="4">High levels of expression along the medial edge of the fusing palate, tooth buds, hair follicles, genitalia and skin.</text>
</comment>
<comment type="PTM">
    <text evidence="1">Phosphorylated. Phosphorylation status depends on the cell cycle and is a signal for ubiquitination and proteasome-mediated degradation.</text>
</comment>
<comment type="similarity">
    <text evidence="2">Belongs to the IRF family.</text>
</comment>
<gene>
    <name type="primary">Irf6</name>
</gene>
<organism>
    <name type="scientific">Mus musculus</name>
    <name type="common">Mouse</name>
    <dbReference type="NCBI Taxonomy" id="10090"/>
    <lineage>
        <taxon>Eukaryota</taxon>
        <taxon>Metazoa</taxon>
        <taxon>Chordata</taxon>
        <taxon>Craniata</taxon>
        <taxon>Vertebrata</taxon>
        <taxon>Euteleostomi</taxon>
        <taxon>Mammalia</taxon>
        <taxon>Eutheria</taxon>
        <taxon>Euarchontoglires</taxon>
        <taxon>Glires</taxon>
        <taxon>Rodentia</taxon>
        <taxon>Myomorpha</taxon>
        <taxon>Muroidea</taxon>
        <taxon>Muridae</taxon>
        <taxon>Murinae</taxon>
        <taxon>Mus</taxon>
        <taxon>Mus</taxon>
    </lineage>
</organism>
<feature type="chain" id="PRO_0000154561" description="Interferon regulatory factor 6">
    <location>
        <begin position="1"/>
        <end position="467"/>
    </location>
</feature>
<feature type="DNA-binding region" description="IRF tryptophan pentad repeat" evidence="2">
    <location>
        <begin position="7"/>
        <end position="115"/>
    </location>
</feature>
<feature type="region of interest" description="Disordered" evidence="3">
    <location>
        <begin position="121"/>
        <end position="155"/>
    </location>
</feature>
<feature type="compositionally biased region" description="Polar residues" evidence="3">
    <location>
        <begin position="121"/>
        <end position="131"/>
    </location>
</feature>
<feature type="compositionally biased region" description="Acidic residues" evidence="3">
    <location>
        <begin position="137"/>
        <end position="151"/>
    </location>
</feature>
<feature type="mutagenesis site" description="Mice show an atypical limb development, are covered by an abnormal smooth skin and die shortly after birth. The esophageal lumen is obliterated by adhesion of the stratified, squamous epithelium lining this structure. The hindlimbs, tail and body are fused together by a thickened epidermis. Epidermis is hyperproliferative but does not undergo a normal differentiation program." evidence="5">
    <original>R</original>
    <variation>C</variation>
    <location>
        <position position="84"/>
    </location>
</feature>
<feature type="sequence conflict" description="In Ref. 1; AAB36714." evidence="9" ref="1">
    <original>T</original>
    <variation>P</variation>
    <location>
        <position position="119"/>
    </location>
</feature>
<evidence type="ECO:0000250" key="1"/>
<evidence type="ECO:0000255" key="2">
    <source>
        <dbReference type="PROSITE-ProRule" id="PRU00840"/>
    </source>
</evidence>
<evidence type="ECO:0000256" key="3">
    <source>
        <dbReference type="SAM" id="MobiDB-lite"/>
    </source>
</evidence>
<evidence type="ECO:0000269" key="4">
    <source>
    </source>
</evidence>
<evidence type="ECO:0000269" key="5">
    <source>
    </source>
</evidence>
<evidence type="ECO:0000269" key="6">
    <source>
    </source>
</evidence>
<evidence type="ECO:0000269" key="7">
    <source>
    </source>
</evidence>
<evidence type="ECO:0000269" key="8">
    <source>
    </source>
</evidence>
<evidence type="ECO:0000305" key="9"/>
<proteinExistence type="evidence at protein level"/>
<keyword id="KW-0963">Cytoplasm</keyword>
<keyword id="KW-0221">Differentiation</keyword>
<keyword id="KW-0238">DNA-binding</keyword>
<keyword id="KW-0539">Nucleus</keyword>
<keyword id="KW-1185">Reference proteome</keyword>
<keyword id="KW-0804">Transcription</keyword>
<keyword id="KW-0805">Transcription regulation</keyword>
<keyword id="KW-0832">Ubl conjugation</keyword>
<protein>
    <recommendedName>
        <fullName>Interferon regulatory factor 6</fullName>
        <shortName>IRF-6</shortName>
    </recommendedName>
</protein>